<protein>
    <recommendedName>
        <fullName evidence="1">Geranylgeranylglyceryl phosphate synthase</fullName>
        <shortName evidence="1">GGGP synthase</shortName>
        <shortName evidence="1">GGGPS</shortName>
        <ecNumber evidence="1">2.5.1.41</ecNumber>
    </recommendedName>
    <alternativeName>
        <fullName evidence="1">(S)-3-O-geranylgeranylglyceryl phosphate synthase</fullName>
    </alternativeName>
    <alternativeName>
        <fullName evidence="1">Phosphoglycerol geranylgeranyltransferase</fullName>
    </alternativeName>
</protein>
<dbReference type="EC" id="2.5.1.41" evidence="1"/>
<dbReference type="EMBL" id="CP001401">
    <property type="protein sequence ID" value="ACP55827.1"/>
    <property type="molecule type" value="Genomic_DNA"/>
</dbReference>
<dbReference type="RefSeq" id="WP_012714014.1">
    <property type="nucleotide sequence ID" value="NC_012632.1"/>
</dbReference>
<dbReference type="SMR" id="C3MZJ5"/>
<dbReference type="KEGG" id="sim:M1627_1956"/>
<dbReference type="HOGENOM" id="CLU_068610_0_0_2"/>
<dbReference type="UniPathway" id="UPA00940"/>
<dbReference type="Proteomes" id="UP000002307">
    <property type="component" value="Chromosome"/>
</dbReference>
<dbReference type="GO" id="GO:0005737">
    <property type="term" value="C:cytoplasm"/>
    <property type="evidence" value="ECO:0007669"/>
    <property type="project" value="UniProtKB-SubCell"/>
</dbReference>
<dbReference type="GO" id="GO:0000287">
    <property type="term" value="F:magnesium ion binding"/>
    <property type="evidence" value="ECO:0007669"/>
    <property type="project" value="UniProtKB-UniRule"/>
</dbReference>
<dbReference type="GO" id="GO:0047294">
    <property type="term" value="F:phosphoglycerol geranylgeranyltransferase activity"/>
    <property type="evidence" value="ECO:0007669"/>
    <property type="project" value="UniProtKB-UniRule"/>
</dbReference>
<dbReference type="GO" id="GO:0046474">
    <property type="term" value="P:glycerophospholipid biosynthetic process"/>
    <property type="evidence" value="ECO:0007669"/>
    <property type="project" value="UniProtKB-UniRule"/>
</dbReference>
<dbReference type="CDD" id="cd02812">
    <property type="entry name" value="PcrB_like"/>
    <property type="match status" value="1"/>
</dbReference>
<dbReference type="FunFam" id="3.20.20.390:FF:000001">
    <property type="entry name" value="Heptaprenylglyceryl phosphate synthase"/>
    <property type="match status" value="1"/>
</dbReference>
<dbReference type="Gene3D" id="3.20.20.390">
    <property type="entry name" value="FMN-linked oxidoreductases"/>
    <property type="match status" value="1"/>
</dbReference>
<dbReference type="HAMAP" id="MF_00112">
    <property type="entry name" value="GGGP_HepGP_synthase"/>
    <property type="match status" value="1"/>
</dbReference>
<dbReference type="InterPro" id="IPR039074">
    <property type="entry name" value="GGGP/HepGP_synthase_I"/>
</dbReference>
<dbReference type="InterPro" id="IPR038597">
    <property type="entry name" value="GGGP/HepGP_synthase_sf"/>
</dbReference>
<dbReference type="InterPro" id="IPR008205">
    <property type="entry name" value="GGGP_HepGP_synthase"/>
</dbReference>
<dbReference type="InterPro" id="IPR010946">
    <property type="entry name" value="GGGP_synth"/>
</dbReference>
<dbReference type="NCBIfam" id="TIGR01769">
    <property type="entry name" value="GGGP"/>
    <property type="match status" value="1"/>
</dbReference>
<dbReference type="NCBIfam" id="TIGR01768">
    <property type="entry name" value="GGGP-family"/>
    <property type="match status" value="1"/>
</dbReference>
<dbReference type="NCBIfam" id="NF003198">
    <property type="entry name" value="PRK04169.1-2"/>
    <property type="match status" value="1"/>
</dbReference>
<dbReference type="NCBIfam" id="NF003202">
    <property type="entry name" value="PRK04169.1-6"/>
    <property type="match status" value="1"/>
</dbReference>
<dbReference type="PANTHER" id="PTHR40029">
    <property type="match status" value="1"/>
</dbReference>
<dbReference type="PANTHER" id="PTHR40029:SF2">
    <property type="entry name" value="HEPTAPRENYLGLYCERYL PHOSPHATE SYNTHASE"/>
    <property type="match status" value="1"/>
</dbReference>
<dbReference type="Pfam" id="PF01884">
    <property type="entry name" value="PcrB"/>
    <property type="match status" value="1"/>
</dbReference>
<dbReference type="SUPFAM" id="SSF51395">
    <property type="entry name" value="FMN-linked oxidoreductases"/>
    <property type="match status" value="1"/>
</dbReference>
<feature type="chain" id="PRO_1000202941" description="Geranylgeranylglyceryl phosphate synthase">
    <location>
        <begin position="1"/>
        <end position="255"/>
    </location>
</feature>
<feature type="binding site" evidence="1">
    <location>
        <position position="34"/>
    </location>
    <ligand>
        <name>Mg(2+)</name>
        <dbReference type="ChEBI" id="CHEBI:18420"/>
    </ligand>
</feature>
<feature type="binding site" evidence="1">
    <location>
        <position position="64"/>
    </location>
    <ligand>
        <name>Mg(2+)</name>
        <dbReference type="ChEBI" id="CHEBI:18420"/>
    </ligand>
</feature>
<feature type="binding site" evidence="1">
    <location>
        <begin position="182"/>
        <end position="188"/>
    </location>
    <ligand>
        <name>sn-glycerol 1-phosphate</name>
        <dbReference type="ChEBI" id="CHEBI:57685"/>
    </ligand>
</feature>
<feature type="binding site" evidence="1">
    <location>
        <begin position="213"/>
        <end position="214"/>
    </location>
    <ligand>
        <name>sn-glycerol 1-phosphate</name>
        <dbReference type="ChEBI" id="CHEBI:57685"/>
    </ligand>
</feature>
<feature type="binding site" evidence="1">
    <location>
        <begin position="235"/>
        <end position="236"/>
    </location>
    <ligand>
        <name>sn-glycerol 1-phosphate</name>
        <dbReference type="ChEBI" id="CHEBI:57685"/>
    </ligand>
</feature>
<reference key="1">
    <citation type="journal article" date="2009" name="Proc. Natl. Acad. Sci. U.S.A.">
        <title>Biogeography of the Sulfolobus islandicus pan-genome.</title>
        <authorList>
            <person name="Reno M.L."/>
            <person name="Held N.L."/>
            <person name="Fields C.J."/>
            <person name="Burke P.V."/>
            <person name="Whitaker R.J."/>
        </authorList>
    </citation>
    <scope>NUCLEOTIDE SEQUENCE [LARGE SCALE GENOMIC DNA]</scope>
    <source>
        <strain>M.16.27</strain>
    </source>
</reference>
<comment type="function">
    <text evidence="1">Prenyltransferase that catalyzes the transfer of the geranylgeranyl moiety of geranylgeranyl diphosphate (GGPP) to the C3 hydroxyl of sn-glycerol-1-phosphate (G1P). This reaction is the first ether-bond-formation step in the biosynthesis of archaeal membrane lipids.</text>
</comment>
<comment type="catalytic activity">
    <reaction evidence="1">
        <text>sn-glycerol 1-phosphate + (2E,6E,10E)-geranylgeranyl diphosphate = sn-3-O-(geranylgeranyl)glycerol 1-phosphate + diphosphate</text>
        <dbReference type="Rhea" id="RHEA:23404"/>
        <dbReference type="ChEBI" id="CHEBI:33019"/>
        <dbReference type="ChEBI" id="CHEBI:57677"/>
        <dbReference type="ChEBI" id="CHEBI:57685"/>
        <dbReference type="ChEBI" id="CHEBI:58756"/>
        <dbReference type="EC" id="2.5.1.41"/>
    </reaction>
</comment>
<comment type="cofactor">
    <cofactor evidence="1">
        <name>Mg(2+)</name>
        <dbReference type="ChEBI" id="CHEBI:18420"/>
    </cofactor>
</comment>
<comment type="pathway">
    <text evidence="1">Membrane lipid metabolism; glycerophospholipid metabolism.</text>
</comment>
<comment type="subcellular location">
    <subcellularLocation>
        <location evidence="1">Cytoplasm</location>
    </subcellularLocation>
</comment>
<comment type="similarity">
    <text evidence="1">Belongs to the GGGP/HepGP synthase family. Group II subfamily.</text>
</comment>
<gene>
    <name type="ordered locus">M1627_1956</name>
</gene>
<keyword id="KW-0963">Cytoplasm</keyword>
<keyword id="KW-0444">Lipid biosynthesis</keyword>
<keyword id="KW-0443">Lipid metabolism</keyword>
<keyword id="KW-0460">Magnesium</keyword>
<keyword id="KW-0479">Metal-binding</keyword>
<keyword id="KW-0594">Phospholipid biosynthesis</keyword>
<keyword id="KW-1208">Phospholipid metabolism</keyword>
<keyword id="KW-0808">Transferase</keyword>
<sequence>MKIRKKKMKLKGKVKKYLMDKLNDNEKLHFSLLDPFKINSSEELKYIAKNLYNVGTDAFLIGGTLGVSKDKLDFVISLLDDYEIPKIIFPSNINLLSEKADALLFLSLLNSDDIYYVIGAQIVAAPIIKMLQMEVIPTAYVIVGHGGTAAHIGKARVIPYDNFELATAYTLAAEYLGMDFVYLEAGSGAPEPIRPEMISFIKKASSIPLIIGGGIRSVEVALKLVEAGANIIVTGNIIERDVDKAIKIIRGIKNK</sequence>
<evidence type="ECO:0000255" key="1">
    <source>
        <dbReference type="HAMAP-Rule" id="MF_00112"/>
    </source>
</evidence>
<proteinExistence type="inferred from homology"/>
<name>GGGPS_SACI3</name>
<organism>
    <name type="scientific">Saccharolobus islandicus (strain M.16.27)</name>
    <name type="common">Sulfolobus islandicus</name>
    <dbReference type="NCBI Taxonomy" id="427318"/>
    <lineage>
        <taxon>Archaea</taxon>
        <taxon>Thermoproteota</taxon>
        <taxon>Thermoprotei</taxon>
        <taxon>Sulfolobales</taxon>
        <taxon>Sulfolobaceae</taxon>
        <taxon>Saccharolobus</taxon>
    </lineage>
</organism>
<accession>C3MZJ5</accession>